<proteinExistence type="evidence at transcript level"/>
<keyword id="KW-0007">Acetylation</keyword>
<keyword id="KW-0067">ATP-binding</keyword>
<keyword id="KW-0963">Cytoplasm</keyword>
<keyword id="KW-0206">Cytoskeleton</keyword>
<keyword id="KW-0378">Hydrolase</keyword>
<keyword id="KW-0514">Muscle protein</keyword>
<keyword id="KW-0547">Nucleotide-binding</keyword>
<comment type="function">
    <text>Actins are highly conserved proteins that are involved in various types of cell motility and are ubiquitously expressed in all eukaryotic cells.</text>
</comment>
<comment type="catalytic activity">
    <reaction evidence="2">
        <text>ATP + H2O = ADP + phosphate + H(+)</text>
        <dbReference type="Rhea" id="RHEA:13065"/>
        <dbReference type="ChEBI" id="CHEBI:15377"/>
        <dbReference type="ChEBI" id="CHEBI:15378"/>
        <dbReference type="ChEBI" id="CHEBI:30616"/>
        <dbReference type="ChEBI" id="CHEBI:43474"/>
        <dbReference type="ChEBI" id="CHEBI:456216"/>
    </reaction>
</comment>
<comment type="subcellular location">
    <subcellularLocation>
        <location>Cytoplasm</location>
        <location>Cytoskeleton</location>
    </subcellularLocation>
</comment>
<comment type="similarity">
    <text evidence="3">Belongs to the actin family.</text>
</comment>
<protein>
    <recommendedName>
        <fullName>Actin, muscle</fullName>
        <ecNumber evidence="2">3.6.4.-</ecNumber>
    </recommendedName>
</protein>
<evidence type="ECO:0000250" key="1"/>
<evidence type="ECO:0000250" key="2">
    <source>
        <dbReference type="UniProtKB" id="P68137"/>
    </source>
</evidence>
<evidence type="ECO:0000305" key="3"/>
<sequence length="380" mass="42187">MCDDEEEEEATPLVCDNGSGLVKAGFAGDDAPRAVFPSIVGRPRHQGVMVGMGQKDAYVGDEAQSKRGILTLKYPVEHGIVTNWDDMEKIWHHTFYNELRIAPEENPCLLTEAPLNPKANREKMTQIMFETFNSPAMYVCIQAVLCLYASGRTTGIVLDSGDGVSHTVPIYEGYALPHAILRLDLAGRELTNYLMKIMTDRGYSFVTTAEREIVRDIKEKLGYVALDFEQEMLTAATSTSLEKSYELPDGQVITIGNERFRCAEALFQPSFLGMESAGVHETVYNSIMKCDIDVRKDLYANNVLSGGTTMFPGIGDRMQKEMVSLAPSTMKIKIIAPPERKYSCWIGGSILASLSTFAAMWIKKSEYDEAGPAIVHRKCF</sequence>
<dbReference type="EC" id="3.6.4.-" evidence="2"/>
<dbReference type="EMBL" id="Y13662">
    <property type="protein sequence ID" value="CAA74013.1"/>
    <property type="molecule type" value="mRNA"/>
</dbReference>
<dbReference type="SMR" id="O17502"/>
<dbReference type="GO" id="GO:0005737">
    <property type="term" value="C:cytoplasm"/>
    <property type="evidence" value="ECO:0007669"/>
    <property type="project" value="UniProtKB-KW"/>
</dbReference>
<dbReference type="GO" id="GO:0005856">
    <property type="term" value="C:cytoskeleton"/>
    <property type="evidence" value="ECO:0007669"/>
    <property type="project" value="UniProtKB-SubCell"/>
</dbReference>
<dbReference type="GO" id="GO:0005524">
    <property type="term" value="F:ATP binding"/>
    <property type="evidence" value="ECO:0007669"/>
    <property type="project" value="UniProtKB-KW"/>
</dbReference>
<dbReference type="GO" id="GO:0016787">
    <property type="term" value="F:hydrolase activity"/>
    <property type="evidence" value="ECO:0007669"/>
    <property type="project" value="UniProtKB-KW"/>
</dbReference>
<dbReference type="CDD" id="cd10224">
    <property type="entry name" value="ASKHA_NBD_actin"/>
    <property type="match status" value="1"/>
</dbReference>
<dbReference type="FunFam" id="2.30.36.70:FF:000001">
    <property type="entry name" value="Actin, alpha skeletal muscle"/>
    <property type="match status" value="1"/>
</dbReference>
<dbReference type="FunFam" id="3.30.420.40:FF:000131">
    <property type="entry name" value="Actin, alpha skeletal muscle"/>
    <property type="match status" value="1"/>
</dbReference>
<dbReference type="FunFam" id="3.30.420.40:FF:000291">
    <property type="entry name" value="Actin, alpha skeletal muscle"/>
    <property type="match status" value="1"/>
</dbReference>
<dbReference type="FunFam" id="3.90.640.10:FF:000047">
    <property type="entry name" value="Actin, alpha skeletal muscle"/>
    <property type="match status" value="1"/>
</dbReference>
<dbReference type="Gene3D" id="3.30.420.40">
    <property type="match status" value="2"/>
</dbReference>
<dbReference type="Gene3D" id="3.90.640.10">
    <property type="entry name" value="Actin, Chain A, domain 4"/>
    <property type="match status" value="1"/>
</dbReference>
<dbReference type="InterPro" id="IPR004000">
    <property type="entry name" value="Actin"/>
</dbReference>
<dbReference type="InterPro" id="IPR020902">
    <property type="entry name" value="Actin/actin-like_CS"/>
</dbReference>
<dbReference type="InterPro" id="IPR004001">
    <property type="entry name" value="Actin_CS"/>
</dbReference>
<dbReference type="InterPro" id="IPR043129">
    <property type="entry name" value="ATPase_NBD"/>
</dbReference>
<dbReference type="PANTHER" id="PTHR11937">
    <property type="entry name" value="ACTIN"/>
    <property type="match status" value="1"/>
</dbReference>
<dbReference type="Pfam" id="PF00022">
    <property type="entry name" value="Actin"/>
    <property type="match status" value="1"/>
</dbReference>
<dbReference type="PRINTS" id="PR00190">
    <property type="entry name" value="ACTIN"/>
</dbReference>
<dbReference type="SMART" id="SM00268">
    <property type="entry name" value="ACTIN"/>
    <property type="match status" value="1"/>
</dbReference>
<dbReference type="SUPFAM" id="SSF53067">
    <property type="entry name" value="Actin-like ATPase domain"/>
    <property type="match status" value="2"/>
</dbReference>
<dbReference type="PROSITE" id="PS00406">
    <property type="entry name" value="ACTINS_1"/>
    <property type="match status" value="1"/>
</dbReference>
<dbReference type="PROSITE" id="PS00432">
    <property type="entry name" value="ACTINS_2"/>
    <property type="match status" value="1"/>
</dbReference>
<dbReference type="PROSITE" id="PS01132">
    <property type="entry name" value="ACTINS_ACT_LIKE"/>
    <property type="match status" value="1"/>
</dbReference>
<name>ACTM_BRALA</name>
<organism>
    <name type="scientific">Branchiostoma lanceolatum</name>
    <name type="common">Common lancelet</name>
    <name type="synonym">Amphioxus lanceolatum</name>
    <dbReference type="NCBI Taxonomy" id="7740"/>
    <lineage>
        <taxon>Eukaryota</taxon>
        <taxon>Metazoa</taxon>
        <taxon>Chordata</taxon>
        <taxon>Cephalochordata</taxon>
        <taxon>Leptocardii</taxon>
        <taxon>Amphioxiformes</taxon>
        <taxon>Branchiostomatidae</taxon>
        <taxon>Branchiostoma</taxon>
    </lineage>
</organism>
<feature type="propeptide" id="PRO_0000000648" description="Removed in mature form" evidence="1">
    <location>
        <begin position="1"/>
        <end position="2"/>
    </location>
</feature>
<feature type="chain" id="PRO_0000000649" description="Actin, muscle">
    <location>
        <begin position="3"/>
        <end position="380"/>
    </location>
</feature>
<feature type="modified residue" description="N-acetylaspartate" evidence="1">
    <location>
        <position position="3"/>
    </location>
</feature>
<accession>O17502</accession>
<reference key="1">
    <citation type="journal article" date="1997" name="J. Mol. Evol.">
        <title>Deuterostomic actin genes and the definition of the chordates: cDNA cloning and gene organization for cephalochordates and hemichordates.</title>
        <authorList>
            <person name="Bovenschulte M."/>
            <person name="Weber K."/>
        </authorList>
    </citation>
    <scope>NUCLEOTIDE SEQUENCE [MRNA]</scope>
</reference>